<dbReference type="EMBL" id="CP000727">
    <property type="protein sequence ID" value="ABS36478.1"/>
    <property type="molecule type" value="Genomic_DNA"/>
</dbReference>
<dbReference type="EMBL" id="AM412317">
    <property type="protein sequence ID" value="CAL82917.1"/>
    <property type="molecule type" value="Genomic_DNA"/>
</dbReference>
<dbReference type="RefSeq" id="WP_003358683.1">
    <property type="nucleotide sequence ID" value="NC_009698.1"/>
</dbReference>
<dbReference type="RefSeq" id="YP_001253890.1">
    <property type="nucleotide sequence ID" value="NC_009495.1"/>
</dbReference>
<dbReference type="RefSeq" id="YP_001387273.1">
    <property type="nucleotide sequence ID" value="NC_009698.1"/>
</dbReference>
<dbReference type="GeneID" id="5185628"/>
<dbReference type="KEGG" id="cbh:CLC_1408"/>
<dbReference type="KEGG" id="cbo:CBO1373"/>
<dbReference type="PATRIC" id="fig|413999.7.peg.1353"/>
<dbReference type="HOGENOM" id="CLU_094511_0_1_9"/>
<dbReference type="PRO" id="PR:A5I1K5"/>
<dbReference type="Proteomes" id="UP000001986">
    <property type="component" value="Chromosome"/>
</dbReference>
<dbReference type="HAMAP" id="MF_00674">
    <property type="entry name" value="UPF0251"/>
    <property type="match status" value="1"/>
</dbReference>
<dbReference type="InterPro" id="IPR013324">
    <property type="entry name" value="RNA_pol_sigma_r3/r4-like"/>
</dbReference>
<dbReference type="InterPro" id="IPR002852">
    <property type="entry name" value="UPF0251"/>
</dbReference>
<dbReference type="PANTHER" id="PTHR37478">
    <property type="match status" value="1"/>
</dbReference>
<dbReference type="PANTHER" id="PTHR37478:SF2">
    <property type="entry name" value="UPF0251 PROTEIN TK0562"/>
    <property type="match status" value="1"/>
</dbReference>
<dbReference type="Pfam" id="PF02001">
    <property type="entry name" value="DUF134"/>
    <property type="match status" value="1"/>
</dbReference>
<dbReference type="SUPFAM" id="SSF88659">
    <property type="entry name" value="Sigma3 and sigma4 domains of RNA polymerase sigma factors"/>
    <property type="match status" value="1"/>
</dbReference>
<protein>
    <recommendedName>
        <fullName evidence="1">UPF0251 protein CBO1373/CLC_1408</fullName>
    </recommendedName>
</protein>
<accession>A5I1K5</accession>
<accession>A7G3A8</accession>
<comment type="similarity">
    <text evidence="1">Belongs to the UPF0251 family.</text>
</comment>
<proteinExistence type="inferred from homology"/>
<name>Y1373_CLOBH</name>
<organism>
    <name type="scientific">Clostridium botulinum (strain Hall / ATCC 3502 / NCTC 13319 / Type A)</name>
    <dbReference type="NCBI Taxonomy" id="441771"/>
    <lineage>
        <taxon>Bacteria</taxon>
        <taxon>Bacillati</taxon>
        <taxon>Bacillota</taxon>
        <taxon>Clostridia</taxon>
        <taxon>Eubacteriales</taxon>
        <taxon>Clostridiaceae</taxon>
        <taxon>Clostridium</taxon>
    </lineage>
</organism>
<reference key="1">
    <citation type="journal article" date="2007" name="Genome Res.">
        <title>Genome sequence of a proteolytic (Group I) Clostridium botulinum strain Hall A and comparative analysis of the clostridial genomes.</title>
        <authorList>
            <person name="Sebaihia M."/>
            <person name="Peck M.W."/>
            <person name="Minton N.P."/>
            <person name="Thomson N.R."/>
            <person name="Holden M.T.G."/>
            <person name="Mitchell W.J."/>
            <person name="Carter A.T."/>
            <person name="Bentley S.D."/>
            <person name="Mason D.R."/>
            <person name="Crossman L."/>
            <person name="Paul C.J."/>
            <person name="Ivens A."/>
            <person name="Wells-Bennik M.H.J."/>
            <person name="Davis I.J."/>
            <person name="Cerdeno-Tarraga A.M."/>
            <person name="Churcher C."/>
            <person name="Quail M.A."/>
            <person name="Chillingworth T."/>
            <person name="Feltwell T."/>
            <person name="Fraser A."/>
            <person name="Goodhead I."/>
            <person name="Hance Z."/>
            <person name="Jagels K."/>
            <person name="Larke N."/>
            <person name="Maddison M."/>
            <person name="Moule S."/>
            <person name="Mungall K."/>
            <person name="Norbertczak H."/>
            <person name="Rabbinowitsch E."/>
            <person name="Sanders M."/>
            <person name="Simmonds M."/>
            <person name="White B."/>
            <person name="Whithead S."/>
            <person name="Parkhill J."/>
        </authorList>
    </citation>
    <scope>NUCLEOTIDE SEQUENCE [LARGE SCALE GENOMIC DNA]</scope>
    <source>
        <strain>Hall / ATCC 3502 / NCTC 13319 / Type A</strain>
    </source>
</reference>
<reference key="2">
    <citation type="journal article" date="2007" name="PLoS ONE">
        <title>Analysis of the neurotoxin complex genes in Clostridium botulinum A1-A4 and B1 strains: BoNT/A3, /Ba4 and /B1 clusters are located within plasmids.</title>
        <authorList>
            <person name="Smith T.J."/>
            <person name="Hill K.K."/>
            <person name="Foley B.T."/>
            <person name="Detter J.C."/>
            <person name="Munk A.C."/>
            <person name="Bruce D.C."/>
            <person name="Doggett N.A."/>
            <person name="Smith L.A."/>
            <person name="Marks J.D."/>
            <person name="Xie G."/>
            <person name="Brettin T.S."/>
        </authorList>
    </citation>
    <scope>NUCLEOTIDE SEQUENCE [LARGE SCALE GENOMIC DNA]</scope>
    <source>
        <strain>Hall / ATCC 3502 / NCTC 13319 / Type A</strain>
    </source>
</reference>
<feature type="chain" id="PRO_1000044743" description="UPF0251 protein CBO1373/CLC_1408">
    <location>
        <begin position="1"/>
        <end position="157"/>
    </location>
</feature>
<sequence>MPRPTKFRRVEFFPENNYFVPWGKPKCEIHEVVLKVEELEAMRLKDIEELNQEQCAEKMEISRQTFQNIIDSARKKVAIALTEGKAIKISGGHYTTKLCKLKCIDCEEIYEINYEQDRHLCPNCGSEKVICNKKADFCRRWCKGQNRKEQYEESKNK</sequence>
<keyword id="KW-1185">Reference proteome</keyword>
<gene>
    <name type="ordered locus">CBO1373</name>
    <name type="ordered locus">CLC_1408</name>
</gene>
<evidence type="ECO:0000255" key="1">
    <source>
        <dbReference type="HAMAP-Rule" id="MF_00674"/>
    </source>
</evidence>